<accession>Q9CWR0</accession>
<accession>Q3TYF3</accession>
<accession>Q8R1Q4</accession>
<feature type="chain" id="PRO_0000322133" description="Rho guanine nucleotide exchange factor 25">
    <location>
        <begin position="1"/>
        <end position="618"/>
    </location>
</feature>
<feature type="domain" description="DH" evidence="2">
    <location>
        <begin position="199"/>
        <end position="375"/>
    </location>
</feature>
<feature type="domain" description="PH" evidence="3">
    <location>
        <begin position="387"/>
        <end position="505"/>
    </location>
</feature>
<feature type="region of interest" description="Disordered" evidence="4">
    <location>
        <begin position="26"/>
        <end position="63"/>
    </location>
</feature>
<feature type="region of interest" description="Disordered" evidence="4">
    <location>
        <begin position="169"/>
        <end position="193"/>
    </location>
</feature>
<feature type="region of interest" description="Important for binding to Rho GTPases" evidence="1">
    <location>
        <begin position="317"/>
        <end position="338"/>
    </location>
</feature>
<feature type="region of interest" description="Sufficient to bind activated GNAQ" evidence="1">
    <location>
        <begin position="506"/>
        <end position="532"/>
    </location>
</feature>
<feature type="region of interest" description="Disordered" evidence="4">
    <location>
        <begin position="521"/>
        <end position="556"/>
    </location>
</feature>
<feature type="region of interest" description="Disordered" evidence="4">
    <location>
        <begin position="584"/>
        <end position="604"/>
    </location>
</feature>
<feature type="compositionally biased region" description="Polar residues" evidence="4">
    <location>
        <begin position="584"/>
        <end position="593"/>
    </location>
</feature>
<feature type="splice variant" id="VSP_031876" description="In isoform 2." evidence="9">
    <original>MKPPDRPTPGRTDRILGVMGGMLRACAVPGQEG</original>
    <variation>MEQSQGSINSVTRAICQVLVDAFR</variation>
    <location>
        <begin position="1"/>
        <end position="33"/>
    </location>
</feature>
<feature type="sequence conflict" description="In Ref. 2; BAE34610." evidence="10" ref="2">
    <original>G</original>
    <variation>E</variation>
    <location>
        <position position="148"/>
    </location>
</feature>
<feature type="sequence conflict" description="In Ref. 2; BAE34610." evidence="10" ref="2">
    <original>E</original>
    <variation>V</variation>
    <location>
        <position position="215"/>
    </location>
</feature>
<organism>
    <name type="scientific">Mus musculus</name>
    <name type="common">Mouse</name>
    <dbReference type="NCBI Taxonomy" id="10090"/>
    <lineage>
        <taxon>Eukaryota</taxon>
        <taxon>Metazoa</taxon>
        <taxon>Chordata</taxon>
        <taxon>Craniata</taxon>
        <taxon>Vertebrata</taxon>
        <taxon>Euteleostomi</taxon>
        <taxon>Mammalia</taxon>
        <taxon>Eutheria</taxon>
        <taxon>Euarchontoglires</taxon>
        <taxon>Glires</taxon>
        <taxon>Rodentia</taxon>
        <taxon>Myomorpha</taxon>
        <taxon>Muroidea</taxon>
        <taxon>Muridae</taxon>
        <taxon>Murinae</taxon>
        <taxon>Mus</taxon>
        <taxon>Mus</taxon>
    </lineage>
</organism>
<protein>
    <recommendedName>
        <fullName>Rho guanine nucleotide exchange factor 25</fullName>
    </recommendedName>
    <alternativeName>
        <fullName>Guanine nucleotide exchange factor GEFT</fullName>
    </alternativeName>
    <alternativeName>
        <fullName>Rac/Cdc42/Rho exchange factor GEFT</fullName>
    </alternativeName>
    <alternativeName>
        <fullName>RhoA/Rac/Cdc42 guanine nucleotide exchange factor GEFT</fullName>
    </alternativeName>
    <alternativeName>
        <fullName>p63RhoGEF</fullName>
    </alternativeName>
</protein>
<comment type="function">
    <text evidence="1 5 6 7">May play a role in actin cytoskeleton reorganization in different tissues since its activation induces formation of actin stress fibers. It works as a guanine nucleotide exchange factor for Rho family of small GTPases. Links specifically G alpha q/11-coupled receptors to RHOA activation (By similarity). May be an important regulator of processes involved in axon and dendrite formation. In neurons seems to be an exchange factor primarily for RAC1. Involved in skeletal myogenesis.</text>
</comment>
<comment type="subunit">
    <text evidence="1 5 8">Interacts with activated GNAQ and GNA11 (By similarity). Interacts (via the DH domain) with POPDC1 (via the C-terminus cytoplasmic tail). Interacts with RHOA, CDC42 and RAC1.</text>
</comment>
<comment type="interaction">
    <interactant intactId="EBI-15708245">
        <id>Q9CWR0</id>
    </interactant>
    <interactant intactId="EBI-7705661">
        <id>Q9ES83</id>
        <label>Bves</label>
    </interactant>
    <organismsDiffer>false</organismsDiffer>
    <experiments>2</experiments>
</comment>
<comment type="subcellular location">
    <subcellularLocation>
        <location evidence="1">Cytoplasm</location>
        <location evidence="1">Myofibril</location>
        <location evidence="1">Sarcomere</location>
    </subcellularLocation>
    <subcellularLocation>
        <location evidence="8">Cell membrane</location>
    </subcellularLocation>
    <subcellularLocation>
        <location evidence="8">Cytoplasm</location>
        <location evidence="8">Myofibril</location>
    </subcellularLocation>
    <text evidence="1">Highly colocalizes with actin regions.</text>
</comment>
<comment type="alternative products">
    <event type="alternative splicing"/>
    <isoform>
        <id>Q9CWR0-1</id>
        <name>1</name>
        <sequence type="displayed"/>
    </isoform>
    <isoform>
        <id>Q9CWR0-2</id>
        <name>2</name>
        <sequence type="described" ref="VSP_031876"/>
    </isoform>
</comment>
<comment type="tissue specificity">
    <text evidence="5 6 7">Highly expressed in excitable tissues, such as brain, heart and muscle. Elevated expression in hippocampus and cerebellum.</text>
</comment>
<comment type="induction">
    <text evidence="6 7">Transcriptionally up-regulated during myogenic differentiation and down-regulated during adipogenic differentiation. Protein levels up-regulated during retinoic acid and dibutyric cAMP-induced outgrowth of neurites.</text>
</comment>
<comment type="domain">
    <text evidence="1">The guanine nucleotide exchange activity is autoinhibited by the PH domain.</text>
</comment>
<gene>
    <name type="primary">Arhgef25</name>
    <name type="synonym">D10Ertd610e</name>
    <name type="synonym">Geft</name>
</gene>
<evidence type="ECO:0000250" key="1"/>
<evidence type="ECO:0000255" key="2">
    <source>
        <dbReference type="PROSITE-ProRule" id="PRU00062"/>
    </source>
</evidence>
<evidence type="ECO:0000255" key="3">
    <source>
        <dbReference type="PROSITE-ProRule" id="PRU00145"/>
    </source>
</evidence>
<evidence type="ECO:0000256" key="4">
    <source>
        <dbReference type="SAM" id="MobiDB-lite"/>
    </source>
</evidence>
<evidence type="ECO:0000269" key="5">
    <source>
    </source>
</evidence>
<evidence type="ECO:0000269" key="6">
    <source>
    </source>
</evidence>
<evidence type="ECO:0000269" key="7">
    <source>
    </source>
</evidence>
<evidence type="ECO:0000269" key="8">
    <source>
    </source>
</evidence>
<evidence type="ECO:0000303" key="9">
    <source>
    </source>
</evidence>
<evidence type="ECO:0000305" key="10"/>
<name>ARHGP_MOUSE</name>
<keyword id="KW-0025">Alternative splicing</keyword>
<keyword id="KW-1003">Cell membrane</keyword>
<keyword id="KW-0963">Cytoplasm</keyword>
<keyword id="KW-0344">Guanine-nucleotide releasing factor</keyword>
<keyword id="KW-0472">Membrane</keyword>
<keyword id="KW-1185">Reference proteome</keyword>
<dbReference type="EMBL" id="AF487515">
    <property type="protein sequence ID" value="AAO49464.1"/>
    <property type="molecule type" value="mRNA"/>
</dbReference>
<dbReference type="EMBL" id="AK010452">
    <property type="protein sequence ID" value="BAB26951.1"/>
    <property type="molecule type" value="mRNA"/>
</dbReference>
<dbReference type="EMBL" id="AK158684">
    <property type="protein sequence ID" value="BAE34610.1"/>
    <property type="molecule type" value="mRNA"/>
</dbReference>
<dbReference type="EMBL" id="BC023367">
    <property type="protein sequence ID" value="AAH23367.1"/>
    <property type="molecule type" value="mRNA"/>
</dbReference>
<dbReference type="CCDS" id="CCDS24231.1">
    <molecule id="Q9CWR0-1"/>
</dbReference>
<dbReference type="CCDS" id="CCDS48715.1">
    <molecule id="Q9CWR0-2"/>
</dbReference>
<dbReference type="RefSeq" id="NP_001159885.1">
    <property type="nucleotide sequence ID" value="NM_001166413.1"/>
</dbReference>
<dbReference type="RefSeq" id="NP_082303.2">
    <property type="nucleotide sequence ID" value="NM_028027.3"/>
</dbReference>
<dbReference type="SMR" id="Q9CWR0"/>
<dbReference type="BioGRID" id="206722">
    <property type="interactions" value="2"/>
</dbReference>
<dbReference type="DIP" id="DIP-46119N"/>
<dbReference type="FunCoup" id="Q9CWR0">
    <property type="interactions" value="254"/>
</dbReference>
<dbReference type="IntAct" id="Q9CWR0">
    <property type="interactions" value="1"/>
</dbReference>
<dbReference type="STRING" id="10090.ENSMUSP00000019611"/>
<dbReference type="GlyGen" id="Q9CWR0">
    <property type="glycosylation" value="2 sites, 1 O-linked glycan (1 site)"/>
</dbReference>
<dbReference type="iPTMnet" id="Q9CWR0"/>
<dbReference type="PhosphoSitePlus" id="Q9CWR0"/>
<dbReference type="PaxDb" id="10090-ENSMUSP00000019611"/>
<dbReference type="ProteomicsDB" id="282014">
    <molecule id="Q9CWR0-1"/>
</dbReference>
<dbReference type="ProteomicsDB" id="282015">
    <molecule id="Q9CWR0-2"/>
</dbReference>
<dbReference type="Pumba" id="Q9CWR0"/>
<dbReference type="DNASU" id="52666"/>
<dbReference type="GeneID" id="52666"/>
<dbReference type="KEGG" id="mmu:52666"/>
<dbReference type="AGR" id="MGI:1277173"/>
<dbReference type="CTD" id="115557"/>
<dbReference type="MGI" id="MGI:1277173">
    <property type="gene designation" value="Arhgef25"/>
</dbReference>
<dbReference type="eggNOG" id="KOG0689">
    <property type="taxonomic scope" value="Eukaryota"/>
</dbReference>
<dbReference type="InParanoid" id="Q9CWR0"/>
<dbReference type="OrthoDB" id="10256089at2759"/>
<dbReference type="PhylomeDB" id="Q9CWR0"/>
<dbReference type="Reactome" id="R-MMU-193648">
    <property type="pathway name" value="NRAGE signals death through JNK"/>
</dbReference>
<dbReference type="Reactome" id="R-MMU-416476">
    <property type="pathway name" value="G alpha (q) signalling events"/>
</dbReference>
<dbReference type="Reactome" id="R-MMU-416482">
    <property type="pathway name" value="G alpha (12/13) signalling events"/>
</dbReference>
<dbReference type="Reactome" id="R-MMU-8980692">
    <property type="pathway name" value="RHOA GTPase cycle"/>
</dbReference>
<dbReference type="Reactome" id="R-MMU-9013026">
    <property type="pathway name" value="RHOB GTPase cycle"/>
</dbReference>
<dbReference type="Reactome" id="R-MMU-9013106">
    <property type="pathway name" value="RHOC GTPase cycle"/>
</dbReference>
<dbReference type="Reactome" id="R-MMU-9013148">
    <property type="pathway name" value="CDC42 GTPase cycle"/>
</dbReference>
<dbReference type="Reactome" id="R-MMU-9013149">
    <property type="pathway name" value="RAC1 GTPase cycle"/>
</dbReference>
<dbReference type="BioGRID-ORCS" id="52666">
    <property type="hits" value="2 hits in 77 CRISPR screens"/>
</dbReference>
<dbReference type="ChiTaRS" id="Arhgef25">
    <property type="organism name" value="mouse"/>
</dbReference>
<dbReference type="PRO" id="PR:Q9CWR0"/>
<dbReference type="Proteomes" id="UP000000589">
    <property type="component" value="Unplaced"/>
</dbReference>
<dbReference type="RNAct" id="Q9CWR0">
    <property type="molecule type" value="protein"/>
</dbReference>
<dbReference type="GO" id="GO:0030016">
    <property type="term" value="C:myofibril"/>
    <property type="evidence" value="ECO:0000314"/>
    <property type="project" value="UniProtKB"/>
</dbReference>
<dbReference type="GO" id="GO:0005886">
    <property type="term" value="C:plasma membrane"/>
    <property type="evidence" value="ECO:0000314"/>
    <property type="project" value="UniProtKB"/>
</dbReference>
<dbReference type="GO" id="GO:0030017">
    <property type="term" value="C:sarcomere"/>
    <property type="evidence" value="ECO:0007669"/>
    <property type="project" value="UniProtKB-SubCell"/>
</dbReference>
<dbReference type="GO" id="GO:0005085">
    <property type="term" value="F:guanyl-nucleotide exchange factor activity"/>
    <property type="evidence" value="ECO:0007669"/>
    <property type="project" value="UniProtKB-KW"/>
</dbReference>
<dbReference type="CDD" id="cd13241">
    <property type="entry name" value="PH2_Kalirin_Trio_p63RhoGEF"/>
    <property type="match status" value="1"/>
</dbReference>
<dbReference type="CDD" id="cd00160">
    <property type="entry name" value="RhoGEF"/>
    <property type="match status" value="1"/>
</dbReference>
<dbReference type="FunFam" id="2.30.29.30:FF:000184">
    <property type="entry name" value="Rho guanine nucleotide exchange factor (GEF) 25"/>
    <property type="match status" value="1"/>
</dbReference>
<dbReference type="FunFam" id="1.20.900.10:FF:000008">
    <property type="entry name" value="rho guanine nucleotide exchange factor 25"/>
    <property type="match status" value="1"/>
</dbReference>
<dbReference type="Gene3D" id="1.20.900.10">
    <property type="entry name" value="Dbl homology (DH) domain"/>
    <property type="match status" value="1"/>
</dbReference>
<dbReference type="Gene3D" id="2.30.29.30">
    <property type="entry name" value="Pleckstrin-homology domain (PH domain)/Phosphotyrosine-binding domain (PTB)"/>
    <property type="match status" value="1"/>
</dbReference>
<dbReference type="InterPro" id="IPR035899">
    <property type="entry name" value="DBL_dom_sf"/>
</dbReference>
<dbReference type="InterPro" id="IPR000219">
    <property type="entry name" value="DH_dom"/>
</dbReference>
<dbReference type="InterPro" id="IPR011993">
    <property type="entry name" value="PH-like_dom_sf"/>
</dbReference>
<dbReference type="InterPro" id="IPR001849">
    <property type="entry name" value="PH_domain"/>
</dbReference>
<dbReference type="InterPro" id="IPR051336">
    <property type="entry name" value="RhoGEF_Guanine_NuclExch_SF"/>
</dbReference>
<dbReference type="InterPro" id="IPR055251">
    <property type="entry name" value="SOS1_NGEF_PH"/>
</dbReference>
<dbReference type="PANTHER" id="PTHR22826:SF117">
    <property type="entry name" value="PLECKSTRIN HOMOLOGY DOMAIN-CONTAINING FAMILY G MEMBER 4B-RELATED"/>
    <property type="match status" value="1"/>
</dbReference>
<dbReference type="PANTHER" id="PTHR22826">
    <property type="entry name" value="RHO GUANINE EXCHANGE FACTOR-RELATED"/>
    <property type="match status" value="1"/>
</dbReference>
<dbReference type="Pfam" id="PF00621">
    <property type="entry name" value="RhoGEF"/>
    <property type="match status" value="1"/>
</dbReference>
<dbReference type="Pfam" id="PF22697">
    <property type="entry name" value="SOS1_NGEF_PH"/>
    <property type="match status" value="1"/>
</dbReference>
<dbReference type="SMART" id="SM00325">
    <property type="entry name" value="RhoGEF"/>
    <property type="match status" value="1"/>
</dbReference>
<dbReference type="SUPFAM" id="SSF48065">
    <property type="entry name" value="DBL homology domain (DH-domain)"/>
    <property type="match status" value="1"/>
</dbReference>
<dbReference type="SUPFAM" id="SSF50729">
    <property type="entry name" value="PH domain-like"/>
    <property type="match status" value="1"/>
</dbReference>
<dbReference type="PROSITE" id="PS50010">
    <property type="entry name" value="DH_2"/>
    <property type="match status" value="1"/>
</dbReference>
<dbReference type="PROSITE" id="PS50003">
    <property type="entry name" value="PH_DOMAIN"/>
    <property type="match status" value="1"/>
</dbReference>
<proteinExistence type="evidence at protein level"/>
<reference key="1">
    <citation type="journal article" date="2003" name="J. Biol. Chem.">
        <title>A Rac/Cdc42-specific exchange factor, GEFT, induces cell proliferation, transformation, and migration.</title>
        <authorList>
            <person name="Guo X."/>
            <person name="Stafford L.J."/>
            <person name="Bryan B."/>
            <person name="Xia C."/>
            <person name="Ma W."/>
            <person name="Wu X."/>
            <person name="Liu D."/>
            <person name="Songyang Z."/>
            <person name="Liu M."/>
        </authorList>
    </citation>
    <scope>NUCLEOTIDE SEQUENCE [MRNA] (ISOFORM 1)</scope>
    <source>
        <strain>C57BL/6J</strain>
    </source>
</reference>
<reference key="2">
    <citation type="journal article" date="2005" name="Science">
        <title>The transcriptional landscape of the mammalian genome.</title>
        <authorList>
            <person name="Carninci P."/>
            <person name="Kasukawa T."/>
            <person name="Katayama S."/>
            <person name="Gough J."/>
            <person name="Frith M.C."/>
            <person name="Maeda N."/>
            <person name="Oyama R."/>
            <person name="Ravasi T."/>
            <person name="Lenhard B."/>
            <person name="Wells C."/>
            <person name="Kodzius R."/>
            <person name="Shimokawa K."/>
            <person name="Bajic V.B."/>
            <person name="Brenner S.E."/>
            <person name="Batalov S."/>
            <person name="Forrest A.R."/>
            <person name="Zavolan M."/>
            <person name="Davis M.J."/>
            <person name="Wilming L.G."/>
            <person name="Aidinis V."/>
            <person name="Allen J.E."/>
            <person name="Ambesi-Impiombato A."/>
            <person name="Apweiler R."/>
            <person name="Aturaliya R.N."/>
            <person name="Bailey T.L."/>
            <person name="Bansal M."/>
            <person name="Baxter L."/>
            <person name="Beisel K.W."/>
            <person name="Bersano T."/>
            <person name="Bono H."/>
            <person name="Chalk A.M."/>
            <person name="Chiu K.P."/>
            <person name="Choudhary V."/>
            <person name="Christoffels A."/>
            <person name="Clutterbuck D.R."/>
            <person name="Crowe M.L."/>
            <person name="Dalla E."/>
            <person name="Dalrymple B.P."/>
            <person name="de Bono B."/>
            <person name="Della Gatta G."/>
            <person name="di Bernardo D."/>
            <person name="Down T."/>
            <person name="Engstrom P."/>
            <person name="Fagiolini M."/>
            <person name="Faulkner G."/>
            <person name="Fletcher C.F."/>
            <person name="Fukushima T."/>
            <person name="Furuno M."/>
            <person name="Futaki S."/>
            <person name="Gariboldi M."/>
            <person name="Georgii-Hemming P."/>
            <person name="Gingeras T.R."/>
            <person name="Gojobori T."/>
            <person name="Green R.E."/>
            <person name="Gustincich S."/>
            <person name="Harbers M."/>
            <person name="Hayashi Y."/>
            <person name="Hensch T.K."/>
            <person name="Hirokawa N."/>
            <person name="Hill D."/>
            <person name="Huminiecki L."/>
            <person name="Iacono M."/>
            <person name="Ikeo K."/>
            <person name="Iwama A."/>
            <person name="Ishikawa T."/>
            <person name="Jakt M."/>
            <person name="Kanapin A."/>
            <person name="Katoh M."/>
            <person name="Kawasawa Y."/>
            <person name="Kelso J."/>
            <person name="Kitamura H."/>
            <person name="Kitano H."/>
            <person name="Kollias G."/>
            <person name="Krishnan S.P."/>
            <person name="Kruger A."/>
            <person name="Kummerfeld S.K."/>
            <person name="Kurochkin I.V."/>
            <person name="Lareau L.F."/>
            <person name="Lazarevic D."/>
            <person name="Lipovich L."/>
            <person name="Liu J."/>
            <person name="Liuni S."/>
            <person name="McWilliam S."/>
            <person name="Madan Babu M."/>
            <person name="Madera M."/>
            <person name="Marchionni L."/>
            <person name="Matsuda H."/>
            <person name="Matsuzawa S."/>
            <person name="Miki H."/>
            <person name="Mignone F."/>
            <person name="Miyake S."/>
            <person name="Morris K."/>
            <person name="Mottagui-Tabar S."/>
            <person name="Mulder N."/>
            <person name="Nakano N."/>
            <person name="Nakauchi H."/>
            <person name="Ng P."/>
            <person name="Nilsson R."/>
            <person name="Nishiguchi S."/>
            <person name="Nishikawa S."/>
            <person name="Nori F."/>
            <person name="Ohara O."/>
            <person name="Okazaki Y."/>
            <person name="Orlando V."/>
            <person name="Pang K.C."/>
            <person name="Pavan W.J."/>
            <person name="Pavesi G."/>
            <person name="Pesole G."/>
            <person name="Petrovsky N."/>
            <person name="Piazza S."/>
            <person name="Reed J."/>
            <person name="Reid J.F."/>
            <person name="Ring B.Z."/>
            <person name="Ringwald M."/>
            <person name="Rost B."/>
            <person name="Ruan Y."/>
            <person name="Salzberg S.L."/>
            <person name="Sandelin A."/>
            <person name="Schneider C."/>
            <person name="Schoenbach C."/>
            <person name="Sekiguchi K."/>
            <person name="Semple C.A."/>
            <person name="Seno S."/>
            <person name="Sessa L."/>
            <person name="Sheng Y."/>
            <person name="Shibata Y."/>
            <person name="Shimada H."/>
            <person name="Shimada K."/>
            <person name="Silva D."/>
            <person name="Sinclair B."/>
            <person name="Sperling S."/>
            <person name="Stupka E."/>
            <person name="Sugiura K."/>
            <person name="Sultana R."/>
            <person name="Takenaka Y."/>
            <person name="Taki K."/>
            <person name="Tammoja K."/>
            <person name="Tan S.L."/>
            <person name="Tang S."/>
            <person name="Taylor M.S."/>
            <person name="Tegner J."/>
            <person name="Teichmann S.A."/>
            <person name="Ueda H.R."/>
            <person name="van Nimwegen E."/>
            <person name="Verardo R."/>
            <person name="Wei C.L."/>
            <person name="Yagi K."/>
            <person name="Yamanishi H."/>
            <person name="Zabarovsky E."/>
            <person name="Zhu S."/>
            <person name="Zimmer A."/>
            <person name="Hide W."/>
            <person name="Bult C."/>
            <person name="Grimmond S.M."/>
            <person name="Teasdale R.D."/>
            <person name="Liu E.T."/>
            <person name="Brusic V."/>
            <person name="Quackenbush J."/>
            <person name="Wahlestedt C."/>
            <person name="Mattick J.S."/>
            <person name="Hume D.A."/>
            <person name="Kai C."/>
            <person name="Sasaki D."/>
            <person name="Tomaru Y."/>
            <person name="Fukuda S."/>
            <person name="Kanamori-Katayama M."/>
            <person name="Suzuki M."/>
            <person name="Aoki J."/>
            <person name="Arakawa T."/>
            <person name="Iida J."/>
            <person name="Imamura K."/>
            <person name="Itoh M."/>
            <person name="Kato T."/>
            <person name="Kawaji H."/>
            <person name="Kawagashira N."/>
            <person name="Kawashima T."/>
            <person name="Kojima M."/>
            <person name="Kondo S."/>
            <person name="Konno H."/>
            <person name="Nakano K."/>
            <person name="Ninomiya N."/>
            <person name="Nishio T."/>
            <person name="Okada M."/>
            <person name="Plessy C."/>
            <person name="Shibata K."/>
            <person name="Shiraki T."/>
            <person name="Suzuki S."/>
            <person name="Tagami M."/>
            <person name="Waki K."/>
            <person name="Watahiki A."/>
            <person name="Okamura-Oho Y."/>
            <person name="Suzuki H."/>
            <person name="Kawai J."/>
            <person name="Hayashizaki Y."/>
        </authorList>
    </citation>
    <scope>NUCLEOTIDE SEQUENCE [LARGE SCALE MRNA] (ISOFORMS 1 AND 2)</scope>
    <source>
        <strain>C57BL/6J</strain>
        <tissue>Visual cortex</tissue>
    </source>
</reference>
<reference key="3">
    <citation type="journal article" date="2004" name="Genome Res.">
        <title>The status, quality, and expansion of the NIH full-length cDNA project: the Mammalian Gene Collection (MGC).</title>
        <authorList>
            <consortium name="The MGC Project Team"/>
        </authorList>
    </citation>
    <scope>NUCLEOTIDE SEQUENCE [LARGE SCALE MRNA] OF 313-618</scope>
    <source>
        <strain>FVB/N</strain>
        <tissue>Mammary tumor</tissue>
    </source>
</reference>
<reference key="4">
    <citation type="journal article" date="2004" name="J. Biol. Chem.">
        <title>GEFT, a Rho family guanine nucleotide exchange factor, regulates neurite outgrowth and dendritic spine formation.</title>
        <authorList>
            <person name="Bryan B."/>
            <person name="Kumar V."/>
            <person name="Stafford L.J."/>
            <person name="Cai Y."/>
            <person name="Wu G."/>
            <person name="Liu M."/>
        </authorList>
    </citation>
    <scope>FUNCTION</scope>
    <scope>INTERACTION WITH RHO GTPASES</scope>
    <scope>TISSUE SPECIFICITY</scope>
</reference>
<reference key="5">
    <citation type="journal article" date="2005" name="Mol. Cell. Biol.">
        <title>Modulation of muscle regeneration, myogenesis, and adipogenesis by the Rho family guanine nucleotide exchange factor GEFT.</title>
        <authorList>
            <person name="Bryan B.A."/>
            <person name="Mitchell D.C."/>
            <person name="Zhao L."/>
            <person name="Ma W."/>
            <person name="Stafford L.J."/>
            <person name="Teng B.B."/>
            <person name="Liu M."/>
        </authorList>
    </citation>
    <scope>FUNCTION</scope>
    <scope>TISSUE SPECIFICITY</scope>
    <scope>INDUCTION</scope>
</reference>
<reference key="6">
    <citation type="journal article" date="2006" name="J. Neurosci. Res.">
        <title>The Rho-family guanine nucleotide exchange factor GEFT enhances retinoic acid- and cAMP-induced neurite outgrowth.</title>
        <authorList>
            <person name="Bryan B.A."/>
            <person name="Cai Y."/>
            <person name="Liu M."/>
        </authorList>
    </citation>
    <scope>FUNCTION</scope>
    <scope>TISSUE SPECIFICITY</scope>
    <scope>INDUCTION</scope>
</reference>
<reference key="7">
    <citation type="journal article" date="2008" name="Proc. Natl. Acad. Sci. U.S.A.">
        <title>Bves directly interacts with GEFT, and controls cell shape and movement through regulation of Rac1/Cdc42 activity.</title>
        <authorList>
            <person name="Smith T.K."/>
            <person name="Hager H.A."/>
            <person name="Francis R."/>
            <person name="Kilkenny D.M."/>
            <person name="Lo C.W."/>
            <person name="Bader D.M."/>
        </authorList>
    </citation>
    <scope>INTERACTION WITH POPDC1</scope>
    <scope>SUBCELLULAR LOCATION</scope>
</reference>
<sequence>MKPPDRPTPGRTDRILGVMGGMLRACAVPGQEGPPERDPLGPGSTKTESDCIEEDQTGQREPEVLAWAPQPESYSIAVSEGSMSASAVSGLAALSGPSSGLSSDPCSPIPPGPVTGLRRWLDHSKHCLSVETEAESGQTGQCENWTLGPTLTTGQELPELTLLTTLLEGPGDKAQPAEEETLSQAPKNEEEQKKMALERSMFVLGELVETERTYEDDLGQIVEGYMATMATQGVPESLRGRDRIVFGNIQQIYEWHRDYFLQELQQCLKDPDWLAQLFIKHERRLHMYVVYCQNKPKSEHVLSEFGDSYFEELRQQLGHRLQLNDLLIKPVQRIMKYQLLLKDFLKYYRRAGKDTEELEQAVEVMCFVPKRCNDMMSLGRLRGFEGKLTAQGKLLGQDTFLVTEPEAGGLLSSRGRERRVFLFEQIIIFSEALGGGGRGGAQPGYVYKNSIKVSCLGLEGNLQGNPCRFALTSRGPEGGIQRYVLQASDPAVSQAWIKQVAQILESQRDFLNALQSPIEYQRRESQTNSLGRPGGPWVGSPGRMRPGDLAQASMHTPINGSLPSLLLLPRGEVSRVLLPLDTQALSDTPQTPHDSPALPTVNTPPCQARLAKLDEDEL</sequence>